<reference key="1">
    <citation type="journal article" date="2007" name="Proc. Natl. Acad. Sci. U.S.A.">
        <title>The genome of Syntrophus aciditrophicus: life at the thermodynamic limit of microbial growth.</title>
        <authorList>
            <person name="McInerney M.J."/>
            <person name="Rohlin L."/>
            <person name="Mouttaki H."/>
            <person name="Kim U."/>
            <person name="Krupp R.S."/>
            <person name="Rios-Hernandez L."/>
            <person name="Sieber J."/>
            <person name="Struchtemeyer C.G."/>
            <person name="Bhattacharyya A."/>
            <person name="Campbell J.W."/>
            <person name="Gunsalus R.P."/>
        </authorList>
    </citation>
    <scope>NUCLEOTIDE SEQUENCE [LARGE SCALE GENOMIC DNA]</scope>
    <source>
        <strain>SB</strain>
    </source>
</reference>
<evidence type="ECO:0000255" key="1">
    <source>
        <dbReference type="HAMAP-Rule" id="MF_00037"/>
    </source>
</evidence>
<organism>
    <name type="scientific">Syntrophus aciditrophicus (strain SB)</name>
    <dbReference type="NCBI Taxonomy" id="56780"/>
    <lineage>
        <taxon>Bacteria</taxon>
        <taxon>Pseudomonadati</taxon>
        <taxon>Thermodesulfobacteriota</taxon>
        <taxon>Syntrophia</taxon>
        <taxon>Syntrophales</taxon>
        <taxon>Syntrophaceae</taxon>
        <taxon>Syntrophus</taxon>
    </lineage>
</organism>
<name>MURB_SYNAS</name>
<keyword id="KW-0131">Cell cycle</keyword>
<keyword id="KW-0132">Cell division</keyword>
<keyword id="KW-0133">Cell shape</keyword>
<keyword id="KW-0961">Cell wall biogenesis/degradation</keyword>
<keyword id="KW-0963">Cytoplasm</keyword>
<keyword id="KW-0274">FAD</keyword>
<keyword id="KW-0285">Flavoprotein</keyword>
<keyword id="KW-0521">NADP</keyword>
<keyword id="KW-0560">Oxidoreductase</keyword>
<keyword id="KW-0573">Peptidoglycan synthesis</keyword>
<keyword id="KW-1185">Reference proteome</keyword>
<accession>Q2LR56</accession>
<comment type="function">
    <text evidence="1">Cell wall formation.</text>
</comment>
<comment type="catalytic activity">
    <reaction evidence="1">
        <text>UDP-N-acetyl-alpha-D-muramate + NADP(+) = UDP-N-acetyl-3-O-(1-carboxyvinyl)-alpha-D-glucosamine + NADPH + H(+)</text>
        <dbReference type="Rhea" id="RHEA:12248"/>
        <dbReference type="ChEBI" id="CHEBI:15378"/>
        <dbReference type="ChEBI" id="CHEBI:57783"/>
        <dbReference type="ChEBI" id="CHEBI:58349"/>
        <dbReference type="ChEBI" id="CHEBI:68483"/>
        <dbReference type="ChEBI" id="CHEBI:70757"/>
        <dbReference type="EC" id="1.3.1.98"/>
    </reaction>
</comment>
<comment type="cofactor">
    <cofactor evidence="1">
        <name>FAD</name>
        <dbReference type="ChEBI" id="CHEBI:57692"/>
    </cofactor>
</comment>
<comment type="pathway">
    <text evidence="1">Cell wall biogenesis; peptidoglycan biosynthesis.</text>
</comment>
<comment type="subcellular location">
    <subcellularLocation>
        <location evidence="1">Cytoplasm</location>
    </subcellularLocation>
</comment>
<comment type="similarity">
    <text evidence="1">Belongs to the MurB family.</text>
</comment>
<proteinExistence type="inferred from homology"/>
<sequence length="312" mass="33965">MRIPVLHDFFIKEQLKSCVSGAVLFDEPLDRYTSMGVGGPADALVVPQSMEELVQLVRFLRKENIPFLTLGNGTNLIVRDGGCRGVVVALRGLQKLSWASDPEGKIRVQAEAGVPLASIVQLCIKESLAGLEFCTGIPGSVGGAVRMNAGAFGREMKDVVTAITVLNEHLELETLSRRELSFEYRRLNLSDEAVIVCAEFALCPGERESISAEISEILALRKSKHPLNFRNAGSIFKNPRNLPAGQLIEETGLKGTRRGDAMISEKHGNFIVNLGHARAADVVDLIEEIKGRVENCRAIQLEAEVHIVGEDG</sequence>
<gene>
    <name evidence="1" type="primary">murB</name>
    <name type="ordered locus">SYNAS_06830</name>
    <name type="ORF">SYN_01748</name>
</gene>
<feature type="chain" id="PRO_0000332517" description="UDP-N-acetylenolpyruvoylglucosamine reductase">
    <location>
        <begin position="1"/>
        <end position="312"/>
    </location>
</feature>
<feature type="domain" description="FAD-binding PCMH-type" evidence="1">
    <location>
        <begin position="37"/>
        <end position="205"/>
    </location>
</feature>
<feature type="active site" evidence="1">
    <location>
        <position position="185"/>
    </location>
</feature>
<feature type="active site" description="Proton donor" evidence="1">
    <location>
        <position position="234"/>
    </location>
</feature>
<feature type="active site" evidence="1">
    <location>
        <position position="304"/>
    </location>
</feature>
<protein>
    <recommendedName>
        <fullName evidence="1">UDP-N-acetylenolpyruvoylglucosamine reductase</fullName>
        <ecNumber evidence="1">1.3.1.98</ecNumber>
    </recommendedName>
    <alternativeName>
        <fullName evidence="1">UDP-N-acetylmuramate dehydrogenase</fullName>
    </alternativeName>
</protein>
<dbReference type="EC" id="1.3.1.98" evidence="1"/>
<dbReference type="EMBL" id="CP000252">
    <property type="protein sequence ID" value="ABC76562.1"/>
    <property type="molecule type" value="Genomic_DNA"/>
</dbReference>
<dbReference type="SMR" id="Q2LR56"/>
<dbReference type="FunCoup" id="Q2LR56">
    <property type="interactions" value="461"/>
</dbReference>
<dbReference type="STRING" id="56780.SYN_01748"/>
<dbReference type="KEGG" id="sat:SYN_01748"/>
<dbReference type="eggNOG" id="COG0812">
    <property type="taxonomic scope" value="Bacteria"/>
</dbReference>
<dbReference type="HOGENOM" id="CLU_035304_1_1_7"/>
<dbReference type="InParanoid" id="Q2LR56"/>
<dbReference type="UniPathway" id="UPA00219"/>
<dbReference type="Proteomes" id="UP000001933">
    <property type="component" value="Chromosome"/>
</dbReference>
<dbReference type="GO" id="GO:0005829">
    <property type="term" value="C:cytosol"/>
    <property type="evidence" value="ECO:0007669"/>
    <property type="project" value="TreeGrafter"/>
</dbReference>
<dbReference type="GO" id="GO:0071949">
    <property type="term" value="F:FAD binding"/>
    <property type="evidence" value="ECO:0007669"/>
    <property type="project" value="InterPro"/>
</dbReference>
<dbReference type="GO" id="GO:0008762">
    <property type="term" value="F:UDP-N-acetylmuramate dehydrogenase activity"/>
    <property type="evidence" value="ECO:0007669"/>
    <property type="project" value="UniProtKB-UniRule"/>
</dbReference>
<dbReference type="GO" id="GO:0051301">
    <property type="term" value="P:cell division"/>
    <property type="evidence" value="ECO:0007669"/>
    <property type="project" value="UniProtKB-KW"/>
</dbReference>
<dbReference type="GO" id="GO:0071555">
    <property type="term" value="P:cell wall organization"/>
    <property type="evidence" value="ECO:0007669"/>
    <property type="project" value="UniProtKB-KW"/>
</dbReference>
<dbReference type="GO" id="GO:0009252">
    <property type="term" value="P:peptidoglycan biosynthetic process"/>
    <property type="evidence" value="ECO:0007669"/>
    <property type="project" value="UniProtKB-UniRule"/>
</dbReference>
<dbReference type="GO" id="GO:0008360">
    <property type="term" value="P:regulation of cell shape"/>
    <property type="evidence" value="ECO:0007669"/>
    <property type="project" value="UniProtKB-KW"/>
</dbReference>
<dbReference type="Gene3D" id="3.30.465.10">
    <property type="match status" value="1"/>
</dbReference>
<dbReference type="Gene3D" id="3.90.78.10">
    <property type="entry name" value="UDP-N-acetylenolpyruvoylglucosamine reductase, C-terminal domain"/>
    <property type="match status" value="1"/>
</dbReference>
<dbReference type="Gene3D" id="3.30.43.10">
    <property type="entry name" value="Uridine Diphospho-n-acetylenolpyruvylglucosamine Reductase, domain 2"/>
    <property type="match status" value="1"/>
</dbReference>
<dbReference type="HAMAP" id="MF_00037">
    <property type="entry name" value="MurB"/>
    <property type="match status" value="1"/>
</dbReference>
<dbReference type="InterPro" id="IPR016166">
    <property type="entry name" value="FAD-bd_PCMH"/>
</dbReference>
<dbReference type="InterPro" id="IPR036318">
    <property type="entry name" value="FAD-bd_PCMH-like_sf"/>
</dbReference>
<dbReference type="InterPro" id="IPR016167">
    <property type="entry name" value="FAD-bd_PCMH_sub1"/>
</dbReference>
<dbReference type="InterPro" id="IPR016169">
    <property type="entry name" value="FAD-bd_PCMH_sub2"/>
</dbReference>
<dbReference type="InterPro" id="IPR003170">
    <property type="entry name" value="MurB"/>
</dbReference>
<dbReference type="InterPro" id="IPR011601">
    <property type="entry name" value="MurB_C"/>
</dbReference>
<dbReference type="InterPro" id="IPR036635">
    <property type="entry name" value="MurB_C_sf"/>
</dbReference>
<dbReference type="InterPro" id="IPR006094">
    <property type="entry name" value="Oxid_FAD_bind_N"/>
</dbReference>
<dbReference type="NCBIfam" id="TIGR00179">
    <property type="entry name" value="murB"/>
    <property type="match status" value="1"/>
</dbReference>
<dbReference type="NCBIfam" id="NF010480">
    <property type="entry name" value="PRK13905.1"/>
    <property type="match status" value="1"/>
</dbReference>
<dbReference type="PANTHER" id="PTHR21071">
    <property type="entry name" value="UDP-N-ACETYLENOLPYRUVOYLGLUCOSAMINE REDUCTASE"/>
    <property type="match status" value="1"/>
</dbReference>
<dbReference type="PANTHER" id="PTHR21071:SF4">
    <property type="entry name" value="UDP-N-ACETYLENOLPYRUVOYLGLUCOSAMINE REDUCTASE"/>
    <property type="match status" value="1"/>
</dbReference>
<dbReference type="Pfam" id="PF01565">
    <property type="entry name" value="FAD_binding_4"/>
    <property type="match status" value="1"/>
</dbReference>
<dbReference type="Pfam" id="PF02873">
    <property type="entry name" value="MurB_C"/>
    <property type="match status" value="1"/>
</dbReference>
<dbReference type="SUPFAM" id="SSF56176">
    <property type="entry name" value="FAD-binding/transporter-associated domain-like"/>
    <property type="match status" value="1"/>
</dbReference>
<dbReference type="SUPFAM" id="SSF56194">
    <property type="entry name" value="Uridine diphospho-N-Acetylenolpyruvylglucosamine reductase, MurB, C-terminal domain"/>
    <property type="match status" value="1"/>
</dbReference>
<dbReference type="PROSITE" id="PS51387">
    <property type="entry name" value="FAD_PCMH"/>
    <property type="match status" value="1"/>
</dbReference>